<reference key="1">
    <citation type="journal article" date="2003" name="Mol. Microbiol.">
        <title>Genome-based analysis of virulence genes in a non-biofilm-forming Staphylococcus epidermidis strain (ATCC 12228).</title>
        <authorList>
            <person name="Zhang Y.-Q."/>
            <person name="Ren S.-X."/>
            <person name="Li H.-L."/>
            <person name="Wang Y.-X."/>
            <person name="Fu G."/>
            <person name="Yang J."/>
            <person name="Qin Z.-Q."/>
            <person name="Miao Y.-G."/>
            <person name="Wang W.-Y."/>
            <person name="Chen R.-S."/>
            <person name="Shen Y."/>
            <person name="Chen Z."/>
            <person name="Yuan Z.-H."/>
            <person name="Zhao G.-P."/>
            <person name="Qu D."/>
            <person name="Danchin A."/>
            <person name="Wen Y.-M."/>
        </authorList>
    </citation>
    <scope>NUCLEOTIDE SEQUENCE [LARGE SCALE GENOMIC DNA]</scope>
    <source>
        <strain>ATCC 12228 / FDA PCI 1200</strain>
    </source>
</reference>
<proteinExistence type="inferred from homology"/>
<dbReference type="EC" id="3.-.-.-"/>
<dbReference type="EMBL" id="AE015929">
    <property type="protein sequence ID" value="AAO04675.1"/>
    <property type="molecule type" value="Genomic_DNA"/>
</dbReference>
<dbReference type="RefSeq" id="NP_764633.1">
    <property type="nucleotide sequence ID" value="NC_004461.1"/>
</dbReference>
<dbReference type="RefSeq" id="WP_001832789.1">
    <property type="nucleotide sequence ID" value="NZ_WBME01000002.1"/>
</dbReference>
<dbReference type="SMR" id="Q8CSM6"/>
<dbReference type="KEGG" id="sep:SE_1078"/>
<dbReference type="PATRIC" id="fig|176280.10.peg.1054"/>
<dbReference type="eggNOG" id="COG1473">
    <property type="taxonomic scope" value="Bacteria"/>
</dbReference>
<dbReference type="HOGENOM" id="CLU_023257_1_0_9"/>
<dbReference type="OrthoDB" id="9776731at2"/>
<dbReference type="Proteomes" id="UP000001411">
    <property type="component" value="Chromosome"/>
</dbReference>
<dbReference type="GO" id="GO:0016787">
    <property type="term" value="F:hydrolase activity"/>
    <property type="evidence" value="ECO:0007669"/>
    <property type="project" value="UniProtKB-KW"/>
</dbReference>
<dbReference type="Gene3D" id="3.30.70.360">
    <property type="match status" value="1"/>
</dbReference>
<dbReference type="Gene3D" id="3.40.630.10">
    <property type="entry name" value="Zn peptidases"/>
    <property type="match status" value="1"/>
</dbReference>
<dbReference type="InterPro" id="IPR017439">
    <property type="entry name" value="Amidohydrolase"/>
</dbReference>
<dbReference type="InterPro" id="IPR036264">
    <property type="entry name" value="Bact_exopeptidase_dim_dom"/>
</dbReference>
<dbReference type="InterPro" id="IPR002933">
    <property type="entry name" value="Peptidase_M20"/>
</dbReference>
<dbReference type="InterPro" id="IPR011650">
    <property type="entry name" value="Peptidase_M20_dimer"/>
</dbReference>
<dbReference type="NCBIfam" id="TIGR01891">
    <property type="entry name" value="amidohydrolases"/>
    <property type="match status" value="1"/>
</dbReference>
<dbReference type="PANTHER" id="PTHR11014:SF63">
    <property type="entry name" value="METALLOPEPTIDASE, PUTATIVE (AFU_ORTHOLOGUE AFUA_6G09600)-RELATED"/>
    <property type="match status" value="1"/>
</dbReference>
<dbReference type="PANTHER" id="PTHR11014">
    <property type="entry name" value="PEPTIDASE M20 FAMILY MEMBER"/>
    <property type="match status" value="1"/>
</dbReference>
<dbReference type="Pfam" id="PF07687">
    <property type="entry name" value="M20_dimer"/>
    <property type="match status" value="1"/>
</dbReference>
<dbReference type="Pfam" id="PF01546">
    <property type="entry name" value="Peptidase_M20"/>
    <property type="match status" value="1"/>
</dbReference>
<dbReference type="PIRSF" id="PIRSF005962">
    <property type="entry name" value="Pept_M20D_amidohydro"/>
    <property type="match status" value="1"/>
</dbReference>
<dbReference type="SUPFAM" id="SSF55031">
    <property type="entry name" value="Bacterial exopeptidase dimerisation domain"/>
    <property type="match status" value="1"/>
</dbReference>
<dbReference type="SUPFAM" id="SSF53187">
    <property type="entry name" value="Zn-dependent exopeptidases"/>
    <property type="match status" value="1"/>
</dbReference>
<organism>
    <name type="scientific">Staphylococcus epidermidis (strain ATCC 12228 / FDA PCI 1200)</name>
    <dbReference type="NCBI Taxonomy" id="176280"/>
    <lineage>
        <taxon>Bacteria</taxon>
        <taxon>Bacillati</taxon>
        <taxon>Bacillota</taxon>
        <taxon>Bacilli</taxon>
        <taxon>Bacillales</taxon>
        <taxon>Staphylococcaceae</taxon>
        <taxon>Staphylococcus</taxon>
    </lineage>
</organism>
<gene>
    <name type="ordered locus">SE_1078</name>
</gene>
<keyword id="KW-0378">Hydrolase</keyword>
<comment type="similarity">
    <text evidence="1">Belongs to the peptidase M20 family.</text>
</comment>
<protein>
    <recommendedName>
        <fullName>Uncharacterized hydrolase SE_1078</fullName>
        <ecNumber>3.-.-.-</ecNumber>
    </recommendedName>
</protein>
<feature type="chain" id="PRO_0000298627" description="Uncharacterized hydrolase SE_1078">
    <location>
        <begin position="1"/>
        <end position="383"/>
    </location>
</feature>
<evidence type="ECO:0000305" key="1"/>
<accession>Q8CSM6</accession>
<name>Y1078_STAES</name>
<sequence>MNELEFVTLHRRHLHQYPELSLHEFETTSYITSFLEDLGVPYDRPLKTGVIAYLEGNSHHTIAFRADIDALPIYEENDIDFKSKNDNVMHACGHDGHTTALMLFVKRCKALYDKSELPHNVVFIFQPAEETGGGANRLIKAGAFDKYPIEAVFGFHVNPFEKEGKIVIRDEEITASATEYRFFLKGLSSHVADKEQGHSCGEGLQHVLSQIGQIQQFHLNGLKRNIIHMGHFEAGEAINTVPSHGYLEGTIRTYDTEDLAIVKHQMHKIAKSVQLLFNVECEVKFEEGYPPTMNHPQLRQAVENAIKGANLEIVEKKLPFLFGEDFSFYGQQLAPSYFVFVGTQNNEKGFVTGLHTAHLNFDEKILIDVVNYYEHLLRNYKEV</sequence>